<dbReference type="EMBL" id="AJ965256">
    <property type="protein sequence ID" value="CAI82664.1"/>
    <property type="molecule type" value="Genomic_DNA"/>
</dbReference>
<dbReference type="RefSeq" id="WP_011309017.1">
    <property type="nucleotide sequence ID" value="NC_007356.1"/>
</dbReference>
<dbReference type="SMR" id="Q3ZZP9"/>
<dbReference type="KEGG" id="deh:cbdbA463"/>
<dbReference type="HOGENOM" id="CLU_103849_1_2_0"/>
<dbReference type="Proteomes" id="UP000000433">
    <property type="component" value="Chromosome"/>
</dbReference>
<dbReference type="GO" id="GO:0005829">
    <property type="term" value="C:cytosol"/>
    <property type="evidence" value="ECO:0007669"/>
    <property type="project" value="TreeGrafter"/>
</dbReference>
<dbReference type="GO" id="GO:0015935">
    <property type="term" value="C:small ribosomal subunit"/>
    <property type="evidence" value="ECO:0007669"/>
    <property type="project" value="TreeGrafter"/>
</dbReference>
<dbReference type="GO" id="GO:0019843">
    <property type="term" value="F:rRNA binding"/>
    <property type="evidence" value="ECO:0007669"/>
    <property type="project" value="UniProtKB-UniRule"/>
</dbReference>
<dbReference type="GO" id="GO:0003735">
    <property type="term" value="F:structural constituent of ribosome"/>
    <property type="evidence" value="ECO:0007669"/>
    <property type="project" value="InterPro"/>
</dbReference>
<dbReference type="GO" id="GO:0000049">
    <property type="term" value="F:tRNA binding"/>
    <property type="evidence" value="ECO:0007669"/>
    <property type="project" value="UniProtKB-UniRule"/>
</dbReference>
<dbReference type="GO" id="GO:0006412">
    <property type="term" value="P:translation"/>
    <property type="evidence" value="ECO:0007669"/>
    <property type="project" value="UniProtKB-UniRule"/>
</dbReference>
<dbReference type="FunFam" id="1.10.8.50:FF:000001">
    <property type="entry name" value="30S ribosomal protein S13"/>
    <property type="match status" value="1"/>
</dbReference>
<dbReference type="FunFam" id="4.10.910.10:FF:000001">
    <property type="entry name" value="30S ribosomal protein S13"/>
    <property type="match status" value="1"/>
</dbReference>
<dbReference type="Gene3D" id="1.10.8.50">
    <property type="match status" value="1"/>
</dbReference>
<dbReference type="Gene3D" id="4.10.910.10">
    <property type="entry name" value="30s ribosomal protein s13, domain 2"/>
    <property type="match status" value="1"/>
</dbReference>
<dbReference type="HAMAP" id="MF_01315">
    <property type="entry name" value="Ribosomal_uS13"/>
    <property type="match status" value="1"/>
</dbReference>
<dbReference type="InterPro" id="IPR027437">
    <property type="entry name" value="Rbsml_uS13_C"/>
</dbReference>
<dbReference type="InterPro" id="IPR001892">
    <property type="entry name" value="Ribosomal_uS13"/>
</dbReference>
<dbReference type="InterPro" id="IPR010979">
    <property type="entry name" value="Ribosomal_uS13-like_H2TH"/>
</dbReference>
<dbReference type="InterPro" id="IPR019980">
    <property type="entry name" value="Ribosomal_uS13_bac-type"/>
</dbReference>
<dbReference type="InterPro" id="IPR018269">
    <property type="entry name" value="Ribosomal_uS13_CS"/>
</dbReference>
<dbReference type="NCBIfam" id="TIGR03631">
    <property type="entry name" value="uS13_bact"/>
    <property type="match status" value="1"/>
</dbReference>
<dbReference type="PANTHER" id="PTHR10871">
    <property type="entry name" value="30S RIBOSOMAL PROTEIN S13/40S RIBOSOMAL PROTEIN S18"/>
    <property type="match status" value="1"/>
</dbReference>
<dbReference type="PANTHER" id="PTHR10871:SF1">
    <property type="entry name" value="SMALL RIBOSOMAL SUBUNIT PROTEIN US13M"/>
    <property type="match status" value="1"/>
</dbReference>
<dbReference type="Pfam" id="PF00416">
    <property type="entry name" value="Ribosomal_S13"/>
    <property type="match status" value="1"/>
</dbReference>
<dbReference type="PIRSF" id="PIRSF002134">
    <property type="entry name" value="Ribosomal_S13"/>
    <property type="match status" value="1"/>
</dbReference>
<dbReference type="SUPFAM" id="SSF46946">
    <property type="entry name" value="S13-like H2TH domain"/>
    <property type="match status" value="1"/>
</dbReference>
<dbReference type="PROSITE" id="PS00646">
    <property type="entry name" value="RIBOSOMAL_S13_1"/>
    <property type="match status" value="1"/>
</dbReference>
<dbReference type="PROSITE" id="PS50159">
    <property type="entry name" value="RIBOSOMAL_S13_2"/>
    <property type="match status" value="1"/>
</dbReference>
<organism>
    <name type="scientific">Dehalococcoides mccartyi (strain CBDB1)</name>
    <dbReference type="NCBI Taxonomy" id="255470"/>
    <lineage>
        <taxon>Bacteria</taxon>
        <taxon>Bacillati</taxon>
        <taxon>Chloroflexota</taxon>
        <taxon>Dehalococcoidia</taxon>
        <taxon>Dehalococcoidales</taxon>
        <taxon>Dehalococcoidaceae</taxon>
        <taxon>Dehalococcoides</taxon>
    </lineage>
</organism>
<keyword id="KW-0687">Ribonucleoprotein</keyword>
<keyword id="KW-0689">Ribosomal protein</keyword>
<keyword id="KW-0694">RNA-binding</keyword>
<keyword id="KW-0699">rRNA-binding</keyword>
<keyword id="KW-0820">tRNA-binding</keyword>
<sequence>MVRIAGTDIPDNKQVYFSLQYIFGIGPARSEKVLVQAGVDKTIRVNKLTDEEINRLREIIDKEYRVEGDLRKEITLNIKRLIDIGCYRGIRHKHNLPVRGQRTKTNARTRRGPRKTVAGRGQKRGATKK</sequence>
<reference key="1">
    <citation type="journal article" date="2005" name="Nat. Biotechnol.">
        <title>Genome sequence of the chlorinated compound-respiring bacterium Dehalococcoides species strain CBDB1.</title>
        <authorList>
            <person name="Kube M."/>
            <person name="Beck A."/>
            <person name="Zinder S.H."/>
            <person name="Kuhl H."/>
            <person name="Reinhardt R."/>
            <person name="Adrian L."/>
        </authorList>
    </citation>
    <scope>NUCLEOTIDE SEQUENCE [LARGE SCALE GENOMIC DNA]</scope>
    <source>
        <strain>CBDB1</strain>
    </source>
</reference>
<name>RS13_DEHMC</name>
<feature type="chain" id="PRO_0000230499" description="Small ribosomal subunit protein uS13">
    <location>
        <begin position="1"/>
        <end position="129"/>
    </location>
</feature>
<feature type="region of interest" description="Disordered" evidence="2">
    <location>
        <begin position="95"/>
        <end position="129"/>
    </location>
</feature>
<feature type="compositionally biased region" description="Basic residues" evidence="2">
    <location>
        <begin position="95"/>
        <end position="114"/>
    </location>
</feature>
<accession>Q3ZZP9</accession>
<evidence type="ECO:0000255" key="1">
    <source>
        <dbReference type="HAMAP-Rule" id="MF_01315"/>
    </source>
</evidence>
<evidence type="ECO:0000256" key="2">
    <source>
        <dbReference type="SAM" id="MobiDB-lite"/>
    </source>
</evidence>
<evidence type="ECO:0000305" key="3"/>
<gene>
    <name evidence="1" type="primary">rpsM</name>
    <name type="ordered locus">cbdbA463</name>
</gene>
<protein>
    <recommendedName>
        <fullName evidence="1">Small ribosomal subunit protein uS13</fullName>
    </recommendedName>
    <alternativeName>
        <fullName evidence="3">30S ribosomal protein S13</fullName>
    </alternativeName>
</protein>
<comment type="function">
    <text evidence="1">Located at the top of the head of the 30S subunit, it contacts several helices of the 16S rRNA. In the 70S ribosome it contacts the 23S rRNA (bridge B1a) and protein L5 of the 50S subunit (bridge B1b), connecting the 2 subunits; these bridges are implicated in subunit movement. Contacts the tRNAs in the A and P-sites.</text>
</comment>
<comment type="subunit">
    <text evidence="1">Part of the 30S ribosomal subunit. Forms a loose heterodimer with protein S19. Forms two bridges to the 50S subunit in the 70S ribosome.</text>
</comment>
<comment type="similarity">
    <text evidence="1">Belongs to the universal ribosomal protein uS13 family.</text>
</comment>
<proteinExistence type="inferred from homology"/>